<reference key="1">
    <citation type="journal article" date="2009" name="ISME J.">
        <title>The genome sequence of the psychrophilic archaeon, Methanococcoides burtonii: the role of genome evolution in cold adaptation.</title>
        <authorList>
            <person name="Allen M.A."/>
            <person name="Lauro F.M."/>
            <person name="Williams T.J."/>
            <person name="Burg D."/>
            <person name="Siddiqui K.S."/>
            <person name="De Francisci D."/>
            <person name="Chong K.W."/>
            <person name="Pilak O."/>
            <person name="Chew H.H."/>
            <person name="De Maere M.Z."/>
            <person name="Ting L."/>
            <person name="Katrib M."/>
            <person name="Ng C."/>
            <person name="Sowers K.R."/>
            <person name="Galperin M.Y."/>
            <person name="Anderson I.J."/>
            <person name="Ivanova N."/>
            <person name="Dalin E."/>
            <person name="Martinez M."/>
            <person name="Lapidus A."/>
            <person name="Hauser L."/>
            <person name="Land M."/>
            <person name="Thomas T."/>
            <person name="Cavicchioli R."/>
        </authorList>
    </citation>
    <scope>NUCLEOTIDE SEQUENCE [LARGE SCALE GENOMIC DNA]</scope>
    <source>
        <strain>DSM 6242 / NBRC 107633 / OCM 468 / ACE-M</strain>
    </source>
</reference>
<gene>
    <name evidence="1" type="primary">asd</name>
    <name type="ordered locus">Mbur_2197</name>
</gene>
<evidence type="ECO:0000255" key="1">
    <source>
        <dbReference type="HAMAP-Rule" id="MF_00664"/>
    </source>
</evidence>
<feature type="chain" id="PRO_0000262283" description="Archaetidylserine decarboxylase beta chain" evidence="1">
    <location>
        <begin position="1"/>
        <end position="170"/>
    </location>
</feature>
<feature type="chain" id="PRO_0000262284" description="Archaetidylserine decarboxylase alpha chain" evidence="1">
    <location>
        <begin position="171"/>
        <end position="208"/>
    </location>
</feature>
<feature type="active site" description="Schiff-base intermediate with substrate; via pyruvic acid" evidence="1">
    <location>
        <position position="171"/>
    </location>
</feature>
<feature type="site" description="Cleavage (non-hydrolytic); by autocatalysis" evidence="1">
    <location>
        <begin position="170"/>
        <end position="171"/>
    </location>
</feature>
<feature type="modified residue" description="Pyruvic acid (Ser); by autocatalysis" evidence="1">
    <location>
        <position position="171"/>
    </location>
</feature>
<protein>
    <recommendedName>
        <fullName evidence="1">Putative archaetidylserine decarboxylase proenzyme</fullName>
        <ecNumber evidence="1">4.1.1.-</ecNumber>
    </recommendedName>
    <component>
        <recommendedName>
            <fullName evidence="1">Archaetidylserine decarboxylase alpha chain</fullName>
        </recommendedName>
    </component>
    <component>
        <recommendedName>
            <fullName evidence="1">Archaetidylserine decarboxylase beta chain</fullName>
        </recommendedName>
    </component>
</protein>
<dbReference type="EC" id="4.1.1.-" evidence="1"/>
<dbReference type="EMBL" id="CP000300">
    <property type="protein sequence ID" value="ABE53062.1"/>
    <property type="molecule type" value="Genomic_DNA"/>
</dbReference>
<dbReference type="RefSeq" id="WP_011500198.1">
    <property type="nucleotide sequence ID" value="NC_007955.1"/>
</dbReference>
<dbReference type="SMR" id="Q12U14"/>
<dbReference type="STRING" id="259564.Mbur_2197"/>
<dbReference type="GeneID" id="3998808"/>
<dbReference type="KEGG" id="mbu:Mbur_2197"/>
<dbReference type="HOGENOM" id="CLU_072492_1_0_2"/>
<dbReference type="OrthoDB" id="50255at2157"/>
<dbReference type="Proteomes" id="UP000001979">
    <property type="component" value="Chromosome"/>
</dbReference>
<dbReference type="GO" id="GO:0005886">
    <property type="term" value="C:plasma membrane"/>
    <property type="evidence" value="ECO:0007669"/>
    <property type="project" value="UniProtKB-SubCell"/>
</dbReference>
<dbReference type="GO" id="GO:0004609">
    <property type="term" value="F:phosphatidylserine decarboxylase activity"/>
    <property type="evidence" value="ECO:0007669"/>
    <property type="project" value="InterPro"/>
</dbReference>
<dbReference type="GO" id="GO:0008654">
    <property type="term" value="P:phospholipid biosynthetic process"/>
    <property type="evidence" value="ECO:0007669"/>
    <property type="project" value="UniProtKB-UniRule"/>
</dbReference>
<dbReference type="HAMAP" id="MF_00664">
    <property type="entry name" value="PS_decarb_PSD_A"/>
    <property type="match status" value="1"/>
</dbReference>
<dbReference type="InterPro" id="IPR003817">
    <property type="entry name" value="PS_Dcarbxylase"/>
</dbReference>
<dbReference type="InterPro" id="IPR033175">
    <property type="entry name" value="PSD-A"/>
</dbReference>
<dbReference type="NCBIfam" id="NF003685">
    <property type="entry name" value="PRK05305.2-5"/>
    <property type="match status" value="1"/>
</dbReference>
<dbReference type="PANTHER" id="PTHR35809">
    <property type="entry name" value="ARCHAETIDYLSERINE DECARBOXYLASE PROENZYME-RELATED"/>
    <property type="match status" value="1"/>
</dbReference>
<dbReference type="PANTHER" id="PTHR35809:SF1">
    <property type="entry name" value="ARCHAETIDYLSERINE DECARBOXYLASE PROENZYME-RELATED"/>
    <property type="match status" value="1"/>
</dbReference>
<dbReference type="Pfam" id="PF02666">
    <property type="entry name" value="PS_Dcarbxylase"/>
    <property type="match status" value="1"/>
</dbReference>
<sequence>MLAKDSLSWVVTVVTLTGIFLTAAVLTGIDLVWYLFYMSLFLTFFVIWFFRDPDRTTRICDHCMFSAADGKVMDVSGRRVCVFMNVHNVHVNRTPISGVVKSITHKKGGYLPAFHKDSERNERTVTVIKSSHGEVNVTQIAGVMVRRIVSYINVGDELVNGEKIGMIRFGSRVDVTIPDDFDIACKVGDRVYAGETVIAKKKNFKVRK</sequence>
<keyword id="KW-1003">Cell membrane</keyword>
<keyword id="KW-0210">Decarboxylase</keyword>
<keyword id="KW-0444">Lipid biosynthesis</keyword>
<keyword id="KW-0443">Lipid metabolism</keyword>
<keyword id="KW-0456">Lyase</keyword>
<keyword id="KW-0472">Membrane</keyword>
<keyword id="KW-0594">Phospholipid biosynthesis</keyword>
<keyword id="KW-1208">Phospholipid metabolism</keyword>
<keyword id="KW-0670">Pyruvate</keyword>
<keyword id="KW-0865">Zymogen</keyword>
<comment type="function">
    <text evidence="1">Catalyzes the formation of archaetidylethanolamine (PtdEtn) from archaetidylserine (PtdSer).</text>
</comment>
<comment type="catalytic activity">
    <reaction evidence="1">
        <text>archaetidylserine + H(+) = archaetidylethanolamine + CO2</text>
        <dbReference type="Rhea" id="RHEA:51488"/>
        <dbReference type="ChEBI" id="CHEBI:15378"/>
        <dbReference type="ChEBI" id="CHEBI:16526"/>
        <dbReference type="ChEBI" id="CHEBI:71517"/>
        <dbReference type="ChEBI" id="CHEBI:134176"/>
    </reaction>
</comment>
<comment type="cofactor">
    <cofactor evidence="1">
        <name>pyruvate</name>
        <dbReference type="ChEBI" id="CHEBI:15361"/>
    </cofactor>
    <text evidence="1">Binds 1 pyruvoyl group covalently per subunit.</text>
</comment>
<comment type="subunit">
    <text evidence="1">Heterodimer of a large membrane-associated beta subunit and a small pyruvoyl-containing alpha subunit.</text>
</comment>
<comment type="subcellular location">
    <subcellularLocation>
        <location evidence="1">Cell membrane</location>
        <topology evidence="1">Peripheral membrane protein</topology>
    </subcellularLocation>
</comment>
<comment type="PTM">
    <text evidence="1">Is synthesized initially as an inactive proenzyme. Formation of the active enzyme involves a self-maturation process in which the active site pyruvoyl group is generated from an internal serine residue via an autocatalytic post-translational modification. Two non-identical subunits are generated from the proenzyme in this reaction, and the pyruvate is formed at the N-terminus of the alpha chain, which is derived from the carboxyl end of the proenzyme. The post-translation cleavage follows an unusual pathway, termed non-hydrolytic serinolysis, in which the side chain hydroxyl group of the serine supplies its oxygen atom to form the C-terminus of the beta chain, while the remainder of the serine residue undergoes an oxidative deamination to produce ammonia and the pyruvoyl prosthetic group on the alpha chain.</text>
</comment>
<comment type="similarity">
    <text evidence="1">Belongs to the phosphatidylserine decarboxylase family. PSD-A subfamily.</text>
</comment>
<organism>
    <name type="scientific">Methanococcoides burtonii (strain DSM 6242 / NBRC 107633 / OCM 468 / ACE-M)</name>
    <dbReference type="NCBI Taxonomy" id="259564"/>
    <lineage>
        <taxon>Archaea</taxon>
        <taxon>Methanobacteriati</taxon>
        <taxon>Methanobacteriota</taxon>
        <taxon>Stenosarchaea group</taxon>
        <taxon>Methanomicrobia</taxon>
        <taxon>Methanosarcinales</taxon>
        <taxon>Methanosarcinaceae</taxon>
        <taxon>Methanococcoides</taxon>
    </lineage>
</organism>
<accession>Q12U14</accession>
<proteinExistence type="inferred from homology"/>
<name>ASD_METBU</name>